<protein>
    <recommendedName>
        <fullName evidence="1">Photosystem II protein D1</fullName>
        <shortName evidence="1">PSII D1 protein</shortName>
        <ecNumber evidence="1">1.10.3.9</ecNumber>
    </recommendedName>
    <alternativeName>
        <fullName evidence="1">Photosystem II Q(B) protein</fullName>
    </alternativeName>
</protein>
<dbReference type="EC" id="1.10.3.9" evidence="1"/>
<dbReference type="EMBL" id="U39610">
    <property type="protein sequence ID" value="AAD09838.1"/>
    <property type="molecule type" value="Genomic_DNA"/>
</dbReference>
<dbReference type="EMBL" id="CP000806">
    <property type="protein sequence ID" value="ACB49987.1"/>
    <property type="molecule type" value="Genomic_DNA"/>
</dbReference>
<dbReference type="EMBL" id="CP000806">
    <property type="protein sequence ID" value="ACB52849.1"/>
    <property type="molecule type" value="Genomic_DNA"/>
</dbReference>
<dbReference type="SMR" id="P51759"/>
<dbReference type="STRING" id="43989.cce_0636"/>
<dbReference type="KEGG" id="cyt:cce_0636"/>
<dbReference type="KEGG" id="cyt:cce_3501"/>
<dbReference type="eggNOG" id="ENOG502Z87P">
    <property type="taxonomic scope" value="Bacteria"/>
</dbReference>
<dbReference type="HOGENOM" id="CLU_054206_1_0_3"/>
<dbReference type="OrthoDB" id="505356at2"/>
<dbReference type="Proteomes" id="UP000001203">
    <property type="component" value="Chromosome circular"/>
</dbReference>
<dbReference type="GO" id="GO:0009523">
    <property type="term" value="C:photosystem II"/>
    <property type="evidence" value="ECO:0007669"/>
    <property type="project" value="UniProtKB-KW"/>
</dbReference>
<dbReference type="GO" id="GO:0031676">
    <property type="term" value="C:plasma membrane-derived thylakoid membrane"/>
    <property type="evidence" value="ECO:0007669"/>
    <property type="project" value="UniProtKB-SubCell"/>
</dbReference>
<dbReference type="GO" id="GO:0016168">
    <property type="term" value="F:chlorophyll binding"/>
    <property type="evidence" value="ECO:0007669"/>
    <property type="project" value="UniProtKB-UniRule"/>
</dbReference>
<dbReference type="GO" id="GO:0045156">
    <property type="term" value="F:electron transporter, transferring electrons within the cyclic electron transport pathway of photosynthesis activity"/>
    <property type="evidence" value="ECO:0007669"/>
    <property type="project" value="InterPro"/>
</dbReference>
<dbReference type="GO" id="GO:0005506">
    <property type="term" value="F:iron ion binding"/>
    <property type="evidence" value="ECO:0007669"/>
    <property type="project" value="UniProtKB-UniRule"/>
</dbReference>
<dbReference type="GO" id="GO:0016682">
    <property type="term" value="F:oxidoreductase activity, acting on diphenols and related substances as donors, oxygen as acceptor"/>
    <property type="evidence" value="ECO:0007669"/>
    <property type="project" value="UniProtKB-UniRule"/>
</dbReference>
<dbReference type="GO" id="GO:0010242">
    <property type="term" value="F:oxygen evolving activity"/>
    <property type="evidence" value="ECO:0007669"/>
    <property type="project" value="UniProtKB-EC"/>
</dbReference>
<dbReference type="GO" id="GO:0009772">
    <property type="term" value="P:photosynthetic electron transport in photosystem II"/>
    <property type="evidence" value="ECO:0007669"/>
    <property type="project" value="InterPro"/>
</dbReference>
<dbReference type="GO" id="GO:0009635">
    <property type="term" value="P:response to herbicide"/>
    <property type="evidence" value="ECO:0007669"/>
    <property type="project" value="UniProtKB-KW"/>
</dbReference>
<dbReference type="CDD" id="cd09289">
    <property type="entry name" value="Photosystem-II_D1"/>
    <property type="match status" value="1"/>
</dbReference>
<dbReference type="FunFam" id="1.20.85.10:FF:000002">
    <property type="entry name" value="Photosystem II protein D1"/>
    <property type="match status" value="1"/>
</dbReference>
<dbReference type="Gene3D" id="1.20.85.10">
    <property type="entry name" value="Photosystem II protein D1-like"/>
    <property type="match status" value="2"/>
</dbReference>
<dbReference type="HAMAP" id="MF_01379">
    <property type="entry name" value="PSII_PsbA_D1"/>
    <property type="match status" value="1"/>
</dbReference>
<dbReference type="InterPro" id="IPR055266">
    <property type="entry name" value="D1/D2"/>
</dbReference>
<dbReference type="InterPro" id="IPR036854">
    <property type="entry name" value="Photo_II_D1/D2_sf"/>
</dbReference>
<dbReference type="InterPro" id="IPR000484">
    <property type="entry name" value="Photo_RC_L/M"/>
</dbReference>
<dbReference type="InterPro" id="IPR055265">
    <property type="entry name" value="Photo_RC_L/M_CS"/>
</dbReference>
<dbReference type="InterPro" id="IPR005867">
    <property type="entry name" value="PSII_D1"/>
</dbReference>
<dbReference type="NCBIfam" id="TIGR01151">
    <property type="entry name" value="psbA"/>
    <property type="match status" value="1"/>
</dbReference>
<dbReference type="PANTHER" id="PTHR33149:SF12">
    <property type="entry name" value="PHOTOSYSTEM II D2 PROTEIN"/>
    <property type="match status" value="1"/>
</dbReference>
<dbReference type="PANTHER" id="PTHR33149">
    <property type="entry name" value="PHOTOSYSTEM II PROTEIN D1"/>
    <property type="match status" value="1"/>
</dbReference>
<dbReference type="Pfam" id="PF00124">
    <property type="entry name" value="Photo_RC"/>
    <property type="match status" value="1"/>
</dbReference>
<dbReference type="PRINTS" id="PR00256">
    <property type="entry name" value="REACTNCENTRE"/>
</dbReference>
<dbReference type="SUPFAM" id="SSF81483">
    <property type="entry name" value="Bacterial photosystem II reaction centre, L and M subunits"/>
    <property type="match status" value="1"/>
</dbReference>
<dbReference type="PROSITE" id="PS00244">
    <property type="entry name" value="REACTION_CENTER"/>
    <property type="match status" value="1"/>
</dbReference>
<sequence>MTTTLQQRESVSLWEQFCQWVTSTNNRIYVGWFGTLMIPTLLTATTCFIIAFIAAPPVDIDGIREPVAGSLLYGNNIVSGAVVPSSNAIGLHFYPIWEAASLDEWLYNGGPYQLVIFHFLIGIFCYMGRQWELSYRLGMRPWICVAYSAPVSAATAVFLIYPIGQGSFSDGMPLGISGTFNFMFVFQAEHNILMHPFHMLGVAGVFGGSLFSAMHGSLVTSSLVRETTEIESQNYGYKFGQEEETYNIVAAHGYFGRLIFQYASFNNSRALHFFLGAWPVIGIWFTAMGVSTMAFNLNGFNFNQSILDSQGRVIGTWADVLNRAGIGMEVMHERNAHNFPLDLASAEPVSAPVING</sequence>
<keyword id="KW-0106">Calcium</keyword>
<keyword id="KW-0148">Chlorophyll</keyword>
<keyword id="KW-0157">Chromophore</keyword>
<keyword id="KW-0249">Electron transport</keyword>
<keyword id="KW-0359">Herbicide resistance</keyword>
<keyword id="KW-0408">Iron</keyword>
<keyword id="KW-0460">Magnesium</keyword>
<keyword id="KW-0464">Manganese</keyword>
<keyword id="KW-0472">Membrane</keyword>
<keyword id="KW-0479">Metal-binding</keyword>
<keyword id="KW-0560">Oxidoreductase</keyword>
<keyword id="KW-0602">Photosynthesis</keyword>
<keyword id="KW-0604">Photosystem II</keyword>
<keyword id="KW-1185">Reference proteome</keyword>
<keyword id="KW-0793">Thylakoid</keyword>
<keyword id="KW-0812">Transmembrane</keyword>
<keyword id="KW-1133">Transmembrane helix</keyword>
<keyword id="KW-0813">Transport</keyword>
<reference key="1">
    <citation type="online journal article" date="1996" name="Plant Gene Register">
        <title>Cloning and sequencing of a psbA gene from the cyanobacterium Cyanothece sp. ATCC 51142.</title>
        <authorList>
            <person name="Adamowicz W.O."/>
            <person name="Sherman L.A."/>
        </authorList>
        <locator>PGR96-004</locator>
    </citation>
    <scope>NUCLEOTIDE SEQUENCE [GENOMIC DNA]</scope>
    <source>
        <strain>BH68K</strain>
    </source>
</reference>
<reference key="2">
    <citation type="journal article" date="2008" name="Proc. Natl. Acad. Sci. U.S.A.">
        <title>The genome of Cyanothece 51142, a unicellular diazotrophic cyanobacterium important in the marine nitrogen cycle.</title>
        <authorList>
            <person name="Welsh E.A."/>
            <person name="Liberton M."/>
            <person name="Stoeckel J."/>
            <person name="Loh T."/>
            <person name="Elvitigala T."/>
            <person name="Wang C."/>
            <person name="Wollam A."/>
            <person name="Fulton R.S."/>
            <person name="Clifton S.W."/>
            <person name="Jacobs J.M."/>
            <person name="Aurora R."/>
            <person name="Ghosh B.K."/>
            <person name="Sherman L.A."/>
            <person name="Smith R.D."/>
            <person name="Wilson R.K."/>
            <person name="Pakrasi H.B."/>
        </authorList>
    </citation>
    <scope>NUCLEOTIDE SEQUENCE [LARGE SCALE GENOMIC DNA]</scope>
    <source>
        <strain>ATCC 51142 / BH68</strain>
    </source>
</reference>
<proteinExistence type="inferred from homology"/>
<organism>
    <name type="scientific">Crocosphaera subtropica (strain ATCC 51142 / BH68)</name>
    <name type="common">Cyanothece sp. (strain ATCC 51142)</name>
    <dbReference type="NCBI Taxonomy" id="43989"/>
    <lineage>
        <taxon>Bacteria</taxon>
        <taxon>Bacillati</taxon>
        <taxon>Cyanobacteriota</taxon>
        <taxon>Cyanophyceae</taxon>
        <taxon>Oscillatoriophycideae</taxon>
        <taxon>Chroococcales</taxon>
        <taxon>Aphanothecaceae</taxon>
        <taxon>Crocosphaera</taxon>
        <taxon>Crocosphaera subtropica</taxon>
    </lineage>
</organism>
<name>PSBA_CROS5</name>
<feature type="chain" id="PRO_0000090480" description="Photosystem II protein D1" evidence="1">
    <location>
        <begin position="1"/>
        <end position="344"/>
    </location>
</feature>
<feature type="propeptide" id="PRO_0000316343" evidence="1">
    <location>
        <begin position="345"/>
        <end position="356"/>
    </location>
</feature>
<feature type="transmembrane region" description="Helical" evidence="1">
    <location>
        <begin position="29"/>
        <end position="46"/>
    </location>
</feature>
<feature type="transmembrane region" description="Helical" evidence="1">
    <location>
        <begin position="118"/>
        <end position="133"/>
    </location>
</feature>
<feature type="transmembrane region" description="Helical" evidence="1">
    <location>
        <begin position="142"/>
        <end position="156"/>
    </location>
</feature>
<feature type="transmembrane region" description="Helical" evidence="1">
    <location>
        <begin position="197"/>
        <end position="218"/>
    </location>
</feature>
<feature type="transmembrane region" description="Helical" evidence="1">
    <location>
        <begin position="274"/>
        <end position="288"/>
    </location>
</feature>
<feature type="binding site" description="axial binding residue" evidence="1">
    <location>
        <position position="118"/>
    </location>
    <ligand>
        <name>chlorophyll a</name>
        <dbReference type="ChEBI" id="CHEBI:58416"/>
        <label>ChlzD1</label>
    </ligand>
    <ligandPart>
        <name>Mg</name>
        <dbReference type="ChEBI" id="CHEBI:25107"/>
    </ligandPart>
</feature>
<feature type="binding site" evidence="1">
    <location>
        <position position="126"/>
    </location>
    <ligand>
        <name>pheophytin a</name>
        <dbReference type="ChEBI" id="CHEBI:136840"/>
        <label>D1</label>
    </ligand>
</feature>
<feature type="binding site" evidence="1">
    <location>
        <position position="170"/>
    </location>
    <ligand>
        <name>[CaMn4O5] cluster</name>
        <dbReference type="ChEBI" id="CHEBI:189552"/>
    </ligand>
</feature>
<feature type="binding site" evidence="1">
    <location>
        <position position="189"/>
    </location>
    <ligand>
        <name>[CaMn4O5] cluster</name>
        <dbReference type="ChEBI" id="CHEBI:189552"/>
    </ligand>
</feature>
<feature type="binding site" description="axial binding residue" evidence="1">
    <location>
        <position position="198"/>
    </location>
    <ligand>
        <name>chlorophyll a</name>
        <dbReference type="ChEBI" id="CHEBI:58416"/>
        <label>PD1</label>
    </ligand>
    <ligandPart>
        <name>Mg</name>
        <dbReference type="ChEBI" id="CHEBI:25107"/>
    </ligandPart>
</feature>
<feature type="binding site" evidence="1">
    <location>
        <position position="215"/>
    </location>
    <ligand>
        <name>a quinone</name>
        <dbReference type="ChEBI" id="CHEBI:132124"/>
        <label>B</label>
    </ligand>
</feature>
<feature type="binding site" evidence="1">
    <location>
        <position position="215"/>
    </location>
    <ligand>
        <name>Fe cation</name>
        <dbReference type="ChEBI" id="CHEBI:24875"/>
        <note>ligand shared with heterodimeric partner</note>
    </ligand>
</feature>
<feature type="binding site" evidence="1">
    <location>
        <begin position="264"/>
        <end position="265"/>
    </location>
    <ligand>
        <name>a quinone</name>
        <dbReference type="ChEBI" id="CHEBI:132124"/>
        <label>B</label>
    </ligand>
</feature>
<feature type="binding site" evidence="1">
    <location>
        <position position="272"/>
    </location>
    <ligand>
        <name>Fe cation</name>
        <dbReference type="ChEBI" id="CHEBI:24875"/>
        <note>ligand shared with heterodimeric partner</note>
    </ligand>
</feature>
<feature type="binding site" evidence="1">
    <location>
        <position position="332"/>
    </location>
    <ligand>
        <name>[CaMn4O5] cluster</name>
        <dbReference type="ChEBI" id="CHEBI:189552"/>
    </ligand>
</feature>
<feature type="binding site" evidence="1">
    <location>
        <position position="333"/>
    </location>
    <ligand>
        <name>[CaMn4O5] cluster</name>
        <dbReference type="ChEBI" id="CHEBI:189552"/>
    </ligand>
</feature>
<feature type="binding site" evidence="1">
    <location>
        <position position="342"/>
    </location>
    <ligand>
        <name>[CaMn4O5] cluster</name>
        <dbReference type="ChEBI" id="CHEBI:189552"/>
    </ligand>
</feature>
<feature type="binding site" evidence="1">
    <location>
        <position position="344"/>
    </location>
    <ligand>
        <name>[CaMn4O5] cluster</name>
        <dbReference type="ChEBI" id="CHEBI:189552"/>
    </ligand>
</feature>
<feature type="site" description="Tyrosine radical intermediate" evidence="1">
    <location>
        <position position="161"/>
    </location>
</feature>
<feature type="site" description="Stabilizes free radical intermediate" evidence="1">
    <location>
        <position position="190"/>
    </location>
</feature>
<feature type="site" description="Cleavage; by CtpA" evidence="1">
    <location>
        <begin position="344"/>
        <end position="345"/>
    </location>
</feature>
<feature type="sequence conflict" description="In Ref. 1; AAD09838." evidence="2" ref="1">
    <original>A</original>
    <variation>R</variation>
    <location>
        <position position="154"/>
    </location>
</feature>
<accession>P51759</accession>
<accession>B1WQ65</accession>
<comment type="function">
    <text evidence="1">Photosystem II (PSII) is a light-driven water:plastoquinone oxidoreductase that uses light energy to abstract electrons from H(2)O, generating O(2) and a proton gradient subsequently used for ATP formation. It consists of a core antenna complex that captures photons, and an electron transfer chain that converts photonic excitation into a charge separation. The D1/D2 (PsbA/PsbD) reaction center heterodimer binds P680, the primary electron donor of PSII as well as several subsequent electron acceptors.</text>
</comment>
<comment type="catalytic activity">
    <reaction evidence="1">
        <text>2 a plastoquinone + 4 hnu + 2 H2O = 2 a plastoquinol + O2</text>
        <dbReference type="Rhea" id="RHEA:36359"/>
        <dbReference type="Rhea" id="RHEA-COMP:9561"/>
        <dbReference type="Rhea" id="RHEA-COMP:9562"/>
        <dbReference type="ChEBI" id="CHEBI:15377"/>
        <dbReference type="ChEBI" id="CHEBI:15379"/>
        <dbReference type="ChEBI" id="CHEBI:17757"/>
        <dbReference type="ChEBI" id="CHEBI:30212"/>
        <dbReference type="ChEBI" id="CHEBI:62192"/>
        <dbReference type="EC" id="1.10.3.9"/>
    </reaction>
</comment>
<comment type="cofactor">
    <text evidence="1">The D1/D2 heterodimer binds P680, chlorophylls that are the primary electron donor of PSII, and subsequent electron acceptors. It shares a non-heme iron and each subunit binds pheophytin, quinone, additional chlorophylls, carotenoids and lipids. D1 provides most of the ligands for the Mn4-Ca-O5 cluster of the oxygen-evolving complex (OEC). There is also a Cl(-1) ion associated with D1 and D2, which is required for oxygen evolution. The PSII complex binds additional chlorophylls, carotenoids and specific lipids.</text>
</comment>
<comment type="subunit">
    <text evidence="1">PSII is composed of 1 copy each of membrane proteins PsbA, PsbB, PsbC, PsbD, PsbE, PsbF, PsbH, PsbI, PsbJ, PsbK, PsbL, PsbM, PsbT, PsbX, PsbY, PsbZ, Psb30/Ycf12, peripheral proteins PsbO, CyanoQ (PsbQ), PsbU, PsbV and a large number of cofactors. It forms dimeric complexes.</text>
</comment>
<comment type="subcellular location">
    <subcellularLocation>
        <location evidence="1">Cellular thylakoid membrane</location>
        <topology evidence="1">Multi-pass membrane protein</topology>
    </subcellularLocation>
</comment>
<comment type="PTM">
    <text evidence="1">Tyr-161 forms a radical intermediate that is referred to as redox-active TyrZ, YZ or Y-Z.</text>
</comment>
<comment type="PTM">
    <text evidence="1">C-terminally processed by CtpA; processing is essential to allow assembly of the oxygen-evolving complex and thus photosynthetic growth.</text>
</comment>
<comment type="miscellaneous">
    <text evidence="1">Cyanobacteria usually contain more than 2 copies of the psbA gene.</text>
</comment>
<comment type="miscellaneous">
    <text evidence="1">2 of the reaction center chlorophylls (ChlD1 and ChlD2) are entirely coordinated by water.</text>
</comment>
<comment type="miscellaneous">
    <text evidence="1">Herbicides such as atrazine, BNT, diuron or ioxynil bind in the Q(B) binding site and block subsequent electron transfer.</text>
</comment>
<comment type="similarity">
    <text evidence="1">Belongs to the reaction center PufL/M/PsbA/D family.</text>
</comment>
<gene>
    <name evidence="1 2" type="primary">psbA1</name>
    <name type="ordered locus">cce_0636</name>
</gene>
<gene>
    <name evidence="1 2" type="primary">psbA2</name>
    <name type="ordered locus">cce_3501</name>
</gene>
<evidence type="ECO:0000255" key="1">
    <source>
        <dbReference type="HAMAP-Rule" id="MF_01379"/>
    </source>
</evidence>
<evidence type="ECO:0000305" key="2"/>